<gene>
    <name type="primary">gadA</name>
    <name type="synonym">gadS</name>
    <name type="ordered locus">b3517</name>
    <name type="ordered locus">JW3485</name>
</gene>
<dbReference type="EC" id="4.1.1.15"/>
<dbReference type="EMBL" id="M84024">
    <property type="protein sequence ID" value="AAA23833.1"/>
    <property type="molecule type" value="Genomic_DNA"/>
</dbReference>
<dbReference type="EMBL" id="X63123">
    <property type="protein sequence ID" value="CAA44834.1"/>
    <property type="molecule type" value="Genomic_DNA"/>
</dbReference>
<dbReference type="EMBL" id="U00039">
    <property type="protein sequence ID" value="AAB18493.1"/>
    <property type="molecule type" value="Genomic_DNA"/>
</dbReference>
<dbReference type="EMBL" id="U00096">
    <property type="protein sequence ID" value="AAC76542.1"/>
    <property type="molecule type" value="Genomic_DNA"/>
</dbReference>
<dbReference type="EMBL" id="AP009048">
    <property type="protein sequence ID" value="BAE77777.1"/>
    <property type="molecule type" value="Genomic_DNA"/>
</dbReference>
<dbReference type="PIR" id="S47737">
    <property type="entry name" value="S24234"/>
</dbReference>
<dbReference type="RefSeq" id="NP_417974.1">
    <property type="nucleotide sequence ID" value="NC_000913.3"/>
</dbReference>
<dbReference type="RefSeq" id="WP_000372240.1">
    <property type="nucleotide sequence ID" value="NZ_SSYX01000029.1"/>
</dbReference>
<dbReference type="PDB" id="1XEY">
    <property type="method" value="X-ray"/>
    <property type="resolution" value="2.05 A"/>
    <property type="chains" value="A/B=1-466"/>
</dbReference>
<dbReference type="PDBsum" id="1XEY"/>
<dbReference type="SASBDB" id="P69908"/>
<dbReference type="SMR" id="P69908"/>
<dbReference type="BioGRID" id="4261597">
    <property type="interactions" value="8"/>
</dbReference>
<dbReference type="DIP" id="DIP-36201N"/>
<dbReference type="FunCoup" id="P69908">
    <property type="interactions" value="803"/>
</dbReference>
<dbReference type="IntAct" id="P69908">
    <property type="interactions" value="15"/>
</dbReference>
<dbReference type="MINT" id="P69908"/>
<dbReference type="STRING" id="511145.b3517"/>
<dbReference type="DrugBank" id="DB03553">
    <property type="generic name" value="Glutaric Acid"/>
</dbReference>
<dbReference type="jPOST" id="P69908"/>
<dbReference type="PaxDb" id="511145-b3517"/>
<dbReference type="EnsemblBacteria" id="AAC76542">
    <property type="protein sequence ID" value="AAC76542"/>
    <property type="gene ID" value="b3517"/>
</dbReference>
<dbReference type="GeneID" id="948027"/>
<dbReference type="KEGG" id="ecj:JW3485"/>
<dbReference type="KEGG" id="eco:b3517"/>
<dbReference type="KEGG" id="ecoc:C3026_19055"/>
<dbReference type="PATRIC" id="fig|511145.12.peg.3626"/>
<dbReference type="EchoBASE" id="EB4302"/>
<dbReference type="eggNOG" id="COG0076">
    <property type="taxonomic scope" value="Bacteria"/>
</dbReference>
<dbReference type="HOGENOM" id="CLU_019582_0_0_6"/>
<dbReference type="InParanoid" id="P69908"/>
<dbReference type="OMA" id="KNIMQNC"/>
<dbReference type="OrthoDB" id="9803665at2"/>
<dbReference type="PhylomeDB" id="P69908"/>
<dbReference type="BioCyc" id="EcoCyc:GLUTDECARBOXA-MONOMER"/>
<dbReference type="BioCyc" id="MetaCyc:GLUTDECARBOXA-MONOMER"/>
<dbReference type="BRENDA" id="4.1.1.15">
    <property type="organism ID" value="2026"/>
</dbReference>
<dbReference type="EvolutionaryTrace" id="P69908"/>
<dbReference type="PRO" id="PR:P69908"/>
<dbReference type="Proteomes" id="UP000000625">
    <property type="component" value="Chromosome"/>
</dbReference>
<dbReference type="GO" id="GO:0005829">
    <property type="term" value="C:cytosol"/>
    <property type="evidence" value="ECO:0007005"/>
    <property type="project" value="UniProtKB"/>
</dbReference>
<dbReference type="GO" id="GO:0016020">
    <property type="term" value="C:membrane"/>
    <property type="evidence" value="ECO:0007005"/>
    <property type="project" value="UniProtKB"/>
</dbReference>
<dbReference type="GO" id="GO:0004351">
    <property type="term" value="F:glutamate decarboxylase activity"/>
    <property type="evidence" value="ECO:0000314"/>
    <property type="project" value="EcoCyc"/>
</dbReference>
<dbReference type="GO" id="GO:0030170">
    <property type="term" value="F:pyridoxal phosphate binding"/>
    <property type="evidence" value="ECO:0007669"/>
    <property type="project" value="InterPro"/>
</dbReference>
<dbReference type="GO" id="GO:0006538">
    <property type="term" value="P:glutamate catabolic process"/>
    <property type="evidence" value="ECO:0000318"/>
    <property type="project" value="GO_Central"/>
</dbReference>
<dbReference type="GO" id="GO:0051454">
    <property type="term" value="P:intracellular pH elevation"/>
    <property type="evidence" value="ECO:0000315"/>
    <property type="project" value="EcoCyc"/>
</dbReference>
<dbReference type="CDD" id="cd06450">
    <property type="entry name" value="DOPA_deC_like"/>
    <property type="match status" value="1"/>
</dbReference>
<dbReference type="FunFam" id="3.40.640.10:FF:000017">
    <property type="entry name" value="Glutamate decarboxylase"/>
    <property type="match status" value="1"/>
</dbReference>
<dbReference type="FunFam" id="3.90.1150.160:FF:000002">
    <property type="entry name" value="Glutamate decarboxylase"/>
    <property type="match status" value="1"/>
</dbReference>
<dbReference type="FunFam" id="4.10.280.50:FF:000001">
    <property type="entry name" value="Glutamate decarboxylase"/>
    <property type="match status" value="1"/>
</dbReference>
<dbReference type="Gene3D" id="3.90.1150.160">
    <property type="match status" value="1"/>
</dbReference>
<dbReference type="Gene3D" id="4.10.280.50">
    <property type="match status" value="1"/>
</dbReference>
<dbReference type="Gene3D" id="3.40.640.10">
    <property type="entry name" value="Type I PLP-dependent aspartate aminotransferase-like (Major domain)"/>
    <property type="match status" value="1"/>
</dbReference>
<dbReference type="InterPro" id="IPR010107">
    <property type="entry name" value="Glutamate_decarboxylase"/>
</dbReference>
<dbReference type="InterPro" id="IPR002129">
    <property type="entry name" value="PyrdxlP-dep_de-COase"/>
</dbReference>
<dbReference type="InterPro" id="IPR015424">
    <property type="entry name" value="PyrdxlP-dep_Trfase"/>
</dbReference>
<dbReference type="InterPro" id="IPR015421">
    <property type="entry name" value="PyrdxlP-dep_Trfase_major"/>
</dbReference>
<dbReference type="InterPro" id="IPR021115">
    <property type="entry name" value="Pyridoxal-P_BS"/>
</dbReference>
<dbReference type="NCBIfam" id="TIGR01788">
    <property type="entry name" value="Glu-decarb-GAD"/>
    <property type="match status" value="1"/>
</dbReference>
<dbReference type="PANTHER" id="PTHR43321">
    <property type="entry name" value="GLUTAMATE DECARBOXYLASE"/>
    <property type="match status" value="1"/>
</dbReference>
<dbReference type="PANTHER" id="PTHR43321:SF3">
    <property type="entry name" value="GLUTAMATE DECARBOXYLASE"/>
    <property type="match status" value="1"/>
</dbReference>
<dbReference type="Pfam" id="PF00282">
    <property type="entry name" value="Pyridoxal_deC"/>
    <property type="match status" value="1"/>
</dbReference>
<dbReference type="SUPFAM" id="SSF53383">
    <property type="entry name" value="PLP-dependent transferases"/>
    <property type="match status" value="1"/>
</dbReference>
<dbReference type="PROSITE" id="PS00392">
    <property type="entry name" value="DDC_GAD_HDC_YDC"/>
    <property type="match status" value="1"/>
</dbReference>
<proteinExistence type="evidence at protein level"/>
<reference key="1">
    <citation type="journal article" date="1992" name="J. Bacteriol.">
        <title>Escherichia coli has two homologous glutamate decarboxylase genes that map to distinct loci.</title>
        <authorList>
            <person name="Smith D.K."/>
            <person name="Kassam T."/>
            <person name="Singh B."/>
            <person name="Elliott J.F."/>
        </authorList>
    </citation>
    <scope>NUCLEOTIDE SEQUENCE [GENOMIC DNA]</scope>
    <source>
        <strain>K12</strain>
    </source>
</reference>
<reference key="2">
    <citation type="journal article" date="1992" name="Eur. J. Biochem.">
        <title>The amino acid sequence of glutamate decarboxylase from Escherichia coli. Evolutionary relationship between mammalian and bacterial enzymes.</title>
        <authorList>
            <person name="Maras B."/>
            <person name="Sweeney G."/>
            <person name="Barra D."/>
            <person name="Bossa F."/>
            <person name="John R.A."/>
        </authorList>
    </citation>
    <scope>PROTEIN SEQUENCE</scope>
    <scope>NUCLEOTIDE SEQUENCE [GENOMIC DNA] OF 148-466</scope>
    <source>
        <strain>ATCC 11246</strain>
    </source>
</reference>
<reference key="3">
    <citation type="journal article" date="1994" name="Nucleic Acids Res.">
        <title>Analysis of the Escherichia coli genome. V. DNA sequence of the region from 76.0 to 81.5 minutes.</title>
        <authorList>
            <person name="Sofia H.J."/>
            <person name="Burland V."/>
            <person name="Daniels D.L."/>
            <person name="Plunkett G. III"/>
            <person name="Blattner F.R."/>
        </authorList>
    </citation>
    <scope>NUCLEOTIDE SEQUENCE [LARGE SCALE GENOMIC DNA]</scope>
    <source>
        <strain>K12 / MG1655 / ATCC 47076</strain>
    </source>
</reference>
<reference key="4">
    <citation type="journal article" date="1997" name="Science">
        <title>The complete genome sequence of Escherichia coli K-12.</title>
        <authorList>
            <person name="Blattner F.R."/>
            <person name="Plunkett G. III"/>
            <person name="Bloch C.A."/>
            <person name="Perna N.T."/>
            <person name="Burland V."/>
            <person name="Riley M."/>
            <person name="Collado-Vides J."/>
            <person name="Glasner J.D."/>
            <person name="Rode C.K."/>
            <person name="Mayhew G.F."/>
            <person name="Gregor J."/>
            <person name="Davis N.W."/>
            <person name="Kirkpatrick H.A."/>
            <person name="Goeden M.A."/>
            <person name="Rose D.J."/>
            <person name="Mau B."/>
            <person name="Shao Y."/>
        </authorList>
    </citation>
    <scope>NUCLEOTIDE SEQUENCE [LARGE SCALE GENOMIC DNA]</scope>
    <source>
        <strain>K12 / MG1655 / ATCC 47076</strain>
    </source>
</reference>
<reference key="5">
    <citation type="journal article" date="2006" name="Mol. Syst. Biol.">
        <title>Highly accurate genome sequences of Escherichia coli K-12 strains MG1655 and W3110.</title>
        <authorList>
            <person name="Hayashi K."/>
            <person name="Morooka N."/>
            <person name="Yamamoto Y."/>
            <person name="Fujita K."/>
            <person name="Isono K."/>
            <person name="Choi S."/>
            <person name="Ohtsubo E."/>
            <person name="Baba T."/>
            <person name="Wanner B.L."/>
            <person name="Mori H."/>
            <person name="Horiuchi T."/>
        </authorList>
    </citation>
    <scope>NUCLEOTIDE SEQUENCE [LARGE SCALE GENOMIC DNA]</scope>
    <source>
        <strain>K12 / W3110 / ATCC 27325 / DSM 5911</strain>
    </source>
</reference>
<reference key="6">
    <citation type="journal article" date="1993" name="Biosci. Biotechnol. Biochem.">
        <title>Expression of the Escherichia coli dimorphic glutamic acid decarboxylases is regulated by the nucleoid protein H-NS.</title>
        <authorList>
            <person name="Yoshida T."/>
            <person name="Yamashino T."/>
            <person name="Ueguchi C."/>
            <person name="Mizuno T."/>
        </authorList>
    </citation>
    <scope>PROTEIN SEQUENCE OF 1-22</scope>
</reference>
<reference key="7">
    <citation type="journal article" date="1997" name="Electrophoresis">
        <title>Comparing the predicted and observed properties of proteins encoded in the genome of Escherichia coli K-12.</title>
        <authorList>
            <person name="Link A.J."/>
            <person name="Robison K."/>
            <person name="Church G.M."/>
        </authorList>
    </citation>
    <scope>PROTEIN SEQUENCE OF 382-392</scope>
    <source>
        <strain>K12 / EMG2</strain>
    </source>
</reference>
<reference key="8">
    <citation type="journal article" date="1997" name="Electrophoresis">
        <title>Escherichia coli proteome analysis using the gene-protein database.</title>
        <authorList>
            <person name="VanBogelen R.A."/>
            <person name="Abshire K.Z."/>
            <person name="Moldover B."/>
            <person name="Olson E.R."/>
            <person name="Neidhardt F.C."/>
        </authorList>
    </citation>
    <scope>IDENTIFICATION BY 2D-GEL</scope>
</reference>
<reference key="9">
    <citation type="journal article" date="1999" name="Mol. Microbiol.">
        <title>The response to stationary-phase stress conditions in Escherichia coli: role and regulation of the glutamic acid decarboxylase system.</title>
        <authorList>
            <person name="De Biase D."/>
            <person name="Tramonti A."/>
            <person name="Bossa F."/>
            <person name="Visca P."/>
        </authorList>
    </citation>
    <scope>TRANSCRIPTIONAL REGULATION</scope>
    <source>
        <strain>ATCC 11246</strain>
    </source>
</reference>
<reference key="10">
    <citation type="journal article" date="2002" name="J. Bacteriol.">
        <title>Functional characterization and regulation of gadX, a gene encoding an AraC/XylS-like transcriptional activator of the Escherichia coli glutamic acid decarboxylase system.</title>
        <authorList>
            <person name="Tramonti A."/>
            <person name="Visca P."/>
            <person name="De Canio M."/>
            <person name="Falconi M."/>
            <person name="De Biase D."/>
        </authorList>
    </citation>
    <scope>TRANSCRIPTIONAL REGULATION</scope>
    <source>
        <strain>ATCC 11246</strain>
    </source>
</reference>
<reference key="11">
    <citation type="journal article" date="2002" name="J. Bacteriol.">
        <title>Escherichia coli gene expression responsive to levels of the response regulator EvgA.</title>
        <authorList>
            <person name="Masuda N."/>
            <person name="Church G.M."/>
        </authorList>
    </citation>
    <scope>TRANSCRIPTIONAL REGULATION</scope>
    <source>
        <strain>K12 / MG1655 / ATCC 47076</strain>
    </source>
</reference>
<reference key="12">
    <citation type="journal article" date="2002" name="J. Bacteriol.">
        <title>Collaborative regulation of Escherichia coli glutamate-dependent acid resistance by two AraC-like regulators, GadX and GadW (YhiW).</title>
        <authorList>
            <person name="Ma Z."/>
            <person name="Richard H."/>
            <person name="Tucker D.L."/>
            <person name="Conway T."/>
            <person name="Foster J.W."/>
        </authorList>
    </citation>
    <scope>TRANSCRIPTIONAL REGULATION</scope>
    <source>
        <strain>K12</strain>
    </source>
</reference>
<reference key="13">
    <citation type="journal article" date="2003" name="J. Bacteriol.">
        <title>Transcriptional expression of Escherichia coli glutamate-dependent acid resistance genes gadA and gadBC in an hns rpoS mutant.</title>
        <authorList>
            <person name="Waterman S.R."/>
            <person name="Small P.L.C."/>
        </authorList>
    </citation>
    <scope>TRANSCRIPTIONAL REGULATION</scope>
</reference>
<reference key="14">
    <citation type="journal article" date="2003" name="Mol. Microbiol.">
        <title>Regulatory network of acid resistance genes in Escherichia coli.</title>
        <authorList>
            <person name="Masuda N."/>
            <person name="Church G.M."/>
        </authorList>
    </citation>
    <scope>TRANSCRIPTIONAL REGULATION</scope>
    <source>
        <strain>K12 / MG1655 / ATCC 47076</strain>
    </source>
</reference>
<reference key="15">
    <citation type="journal article" date="2003" name="Mol. Microbiol.">
        <title>GadE (YhiE) activates glutamate decarboxylase-dependent acid resistance in Escherichia coli K-12.</title>
        <authorList>
            <person name="Ma Z."/>
            <person name="Gong S."/>
            <person name="Richard H."/>
            <person name="Tucker D.L."/>
            <person name="Conway T."/>
            <person name="Foster J.W."/>
        </authorList>
    </citation>
    <scope>TRANSCRIPTIONAL REGULATION</scope>
    <source>
        <strain>K12</strain>
    </source>
</reference>
<reference key="16">
    <citation type="submission" date="2004-09" db="PDB data bank">
        <title>Structure of the complex of Escherichia coli glutamate decarboxylase (gadA) with glutarate at 2.05 A resolution.</title>
        <authorList>
            <person name="Dutyshev D.I."/>
            <person name="Darii E.L."/>
            <person name="Fomenkova N.P."/>
            <person name="Pechik I.V."/>
            <person name="Polyakov K.M."/>
            <person name="Nikonov S.V."/>
            <person name="Andreeva N.S."/>
            <person name="Sukhareva B.S."/>
        </authorList>
    </citation>
    <scope>X-RAY CRYSTALLOGRAPHY (2.05 ANGSTROMS)</scope>
</reference>
<organism>
    <name type="scientific">Escherichia coli (strain K12)</name>
    <dbReference type="NCBI Taxonomy" id="83333"/>
    <lineage>
        <taxon>Bacteria</taxon>
        <taxon>Pseudomonadati</taxon>
        <taxon>Pseudomonadota</taxon>
        <taxon>Gammaproteobacteria</taxon>
        <taxon>Enterobacterales</taxon>
        <taxon>Enterobacteriaceae</taxon>
        <taxon>Escherichia</taxon>
    </lineage>
</organism>
<comment type="function">
    <text>Converts glutamate to gamma-aminobutyrate (GABA), consuming one intracellular proton in the reaction. The gad system helps to maintain a near-neutral intracellular pH when cells are exposed to extremely acidic conditions. The ability to survive transit through the acidic conditions of the stomach is essential for successful colonization of the mammalian host by commensal and pathogenic bacteria.</text>
</comment>
<comment type="catalytic activity">
    <reaction>
        <text>L-glutamate + H(+) = 4-aminobutanoate + CO2</text>
        <dbReference type="Rhea" id="RHEA:17785"/>
        <dbReference type="ChEBI" id="CHEBI:15378"/>
        <dbReference type="ChEBI" id="CHEBI:16526"/>
        <dbReference type="ChEBI" id="CHEBI:29985"/>
        <dbReference type="ChEBI" id="CHEBI:59888"/>
        <dbReference type="EC" id="4.1.1.15"/>
    </reaction>
</comment>
<comment type="cofactor">
    <cofactor>
        <name>pyridoxal 5'-phosphate</name>
        <dbReference type="ChEBI" id="CHEBI:597326"/>
    </cofactor>
</comment>
<comment type="subunit">
    <text>Homohexamer.</text>
</comment>
<comment type="induction">
    <text evidence="2 3 4 5 6 7 8">By acidic conditions. Expression is regulated by a complex system involving RpoS, cAMP, CRP, EvgAS, H-NS, GadE, GadW and GadX. The level of involvement for each regulator varies depending upon the growth phase and the medium.</text>
</comment>
<comment type="similarity">
    <text evidence="9">Belongs to the group II decarboxylase family.</text>
</comment>
<feature type="chain" id="PRO_0000146978" description="Glutamate decarboxylase alpha">
    <location>
        <begin position="1"/>
        <end position="466"/>
    </location>
</feature>
<feature type="binding site" evidence="1">
    <location>
        <position position="62"/>
    </location>
    <ligand>
        <name>substrate</name>
    </ligand>
</feature>
<feature type="binding site" evidence="1">
    <location>
        <position position="83"/>
    </location>
    <ligand>
        <name>substrate</name>
    </ligand>
</feature>
<feature type="binding site" evidence="1">
    <location>
        <begin position="126"/>
        <end position="127"/>
    </location>
    <ligand>
        <name>pyridoxal 5'-phosphate</name>
        <dbReference type="ChEBI" id="CHEBI:597326"/>
    </ligand>
</feature>
<feature type="binding site" evidence="1">
    <location>
        <position position="212"/>
    </location>
    <ligand>
        <name>pyridoxal 5'-phosphate</name>
        <dbReference type="ChEBI" id="CHEBI:597326"/>
    </ligand>
</feature>
<feature type="binding site" evidence="1">
    <location>
        <position position="275"/>
    </location>
    <ligand>
        <name>pyridoxal 5'-phosphate</name>
        <dbReference type="ChEBI" id="CHEBI:597326"/>
    </ligand>
</feature>
<feature type="modified residue" description="N6-(pyridoxal phosphate)lysine">
    <location>
        <position position="276"/>
    </location>
</feature>
<feature type="sequence conflict" description="In Ref. 2; AA sequence." evidence="9" ref="2">
    <original>C</original>
    <variation>S</variation>
    <location>
        <position position="64"/>
    </location>
</feature>
<feature type="sequence conflict" description="In Ref. 2; AA sequence." evidence="9" ref="2">
    <original>H</original>
    <variation>R</variation>
    <location>
        <position position="73"/>
    </location>
</feature>
<feature type="sequence conflict" description="In Ref. 2; AA sequence." evidence="9" ref="2">
    <original>D</original>
    <variation>N</variation>
    <location>
        <position position="153"/>
    </location>
</feature>
<feature type="sequence conflict" description="In Ref. 2; CAA44834." evidence="9" ref="2">
    <original>C</original>
    <variation>S</variation>
    <location>
        <position position="165"/>
    </location>
</feature>
<feature type="sequence conflict" description="In Ref. 2; CAA44834." evidence="9" ref="2">
    <original>T</original>
    <variation>N</variation>
    <location>
        <position position="208"/>
    </location>
</feature>
<feature type="sequence conflict" description="In Ref. 2; CAA44834." evidence="9" ref="2">
    <original>L</original>
    <variation>V</variation>
    <location>
        <position position="295"/>
    </location>
</feature>
<feature type="sequence conflict" description="In Ref. 2; AA sequence." evidence="9" ref="2">
    <original>D</original>
    <variation>N</variation>
    <location>
        <position position="355"/>
    </location>
</feature>
<feature type="helix" evidence="10">
    <location>
        <begin position="6"/>
        <end position="14"/>
    </location>
</feature>
<feature type="turn" evidence="10">
    <location>
        <begin position="17"/>
        <end position="19"/>
    </location>
</feature>
<feature type="helix" evidence="10">
    <location>
        <begin position="21"/>
        <end position="24"/>
    </location>
</feature>
<feature type="helix" evidence="10">
    <location>
        <begin position="39"/>
        <end position="49"/>
    </location>
</feature>
<feature type="helix" evidence="10">
    <location>
        <begin position="50"/>
        <end position="53"/>
    </location>
</feature>
<feature type="helix" evidence="10">
    <location>
        <begin position="56"/>
        <end position="58"/>
    </location>
</feature>
<feature type="helix" evidence="10">
    <location>
        <begin position="70"/>
        <end position="78"/>
    </location>
</feature>
<feature type="turn" evidence="10">
    <location>
        <begin position="79"/>
        <end position="81"/>
    </location>
</feature>
<feature type="turn" evidence="10">
    <location>
        <begin position="87"/>
        <end position="89"/>
    </location>
</feature>
<feature type="helix" evidence="10">
    <location>
        <begin position="91"/>
        <end position="107"/>
    </location>
</feature>
<feature type="strand" evidence="10">
    <location>
        <begin position="119"/>
        <end position="125"/>
    </location>
</feature>
<feature type="helix" evidence="10">
    <location>
        <begin position="126"/>
        <end position="147"/>
    </location>
</feature>
<feature type="strand" evidence="10">
    <location>
        <begin position="156"/>
        <end position="161"/>
    </location>
</feature>
<feature type="helix" evidence="10">
    <location>
        <begin position="165"/>
        <end position="172"/>
    </location>
</feature>
<feature type="strand" evidence="10">
    <location>
        <begin position="176"/>
        <end position="179"/>
    </location>
</feature>
<feature type="helix" evidence="10">
    <location>
        <begin position="191"/>
        <end position="197"/>
    </location>
</feature>
<feature type="strand" evidence="10">
    <location>
        <begin position="202"/>
        <end position="206"/>
    </location>
</feature>
<feature type="strand" evidence="10">
    <location>
        <begin position="208"/>
        <end position="210"/>
    </location>
</feature>
<feature type="turn" evidence="10">
    <location>
        <begin position="212"/>
        <end position="214"/>
    </location>
</feature>
<feature type="helix" evidence="10">
    <location>
        <begin position="220"/>
        <end position="234"/>
    </location>
</feature>
<feature type="strand" evidence="10">
    <location>
        <begin position="240"/>
        <end position="243"/>
    </location>
</feature>
<feature type="helix" evidence="10">
    <location>
        <begin position="247"/>
        <end position="249"/>
    </location>
</feature>
<feature type="helix" evidence="10">
    <location>
        <begin position="251"/>
        <end position="254"/>
    </location>
</feature>
<feature type="strand" evidence="10">
    <location>
        <begin position="267"/>
        <end position="273"/>
    </location>
</feature>
<feature type="turn" evidence="10">
    <location>
        <begin position="274"/>
        <end position="278"/>
    </location>
</feature>
<feature type="strand" evidence="10">
    <location>
        <begin position="285"/>
        <end position="291"/>
    </location>
</feature>
<feature type="helix" evidence="10">
    <location>
        <begin position="292"/>
        <end position="294"/>
    </location>
</feature>
<feature type="helix" evidence="10">
    <location>
        <begin position="297"/>
        <end position="299"/>
    </location>
</feature>
<feature type="strand" evidence="10">
    <location>
        <begin position="301"/>
        <end position="305"/>
    </location>
</feature>
<feature type="strand" evidence="10">
    <location>
        <begin position="308"/>
        <end position="312"/>
    </location>
</feature>
<feature type="helix" evidence="10">
    <location>
        <begin position="322"/>
        <end position="357"/>
    </location>
</feature>
<feature type="strand" evidence="10">
    <location>
        <begin position="360"/>
        <end position="368"/>
    </location>
</feature>
<feature type="turn" evidence="10">
    <location>
        <begin position="371"/>
        <end position="373"/>
    </location>
</feature>
<feature type="strand" evidence="10">
    <location>
        <begin position="374"/>
        <end position="382"/>
    </location>
</feature>
<feature type="helix" evidence="10">
    <location>
        <begin position="392"/>
        <end position="400"/>
    </location>
</feature>
<feature type="turn" evidence="10">
    <location>
        <begin position="401"/>
        <end position="403"/>
    </location>
</feature>
<feature type="strand" evidence="10">
    <location>
        <begin position="408"/>
        <end position="410"/>
    </location>
</feature>
<feature type="helix" evidence="10">
    <location>
        <begin position="413"/>
        <end position="415"/>
    </location>
</feature>
<feature type="strand" evidence="10">
    <location>
        <begin position="419"/>
        <end position="424"/>
    </location>
</feature>
<feature type="helix" evidence="10">
    <location>
        <begin position="431"/>
        <end position="449"/>
    </location>
</feature>
<protein>
    <recommendedName>
        <fullName>Glutamate decarboxylase alpha</fullName>
        <shortName>GAD-alpha</shortName>
        <ecNumber>4.1.1.15</ecNumber>
    </recommendedName>
</protein>
<sequence>MDQKLLTDFRSELLDSRFGAKAISTIAESKRFPLHEMRDDVAFQIINDELYLDGNARQNLATFCQTWDDENVHKLMDLSINKNWIDKEEYPQSAAIDLRCVNMVADLWHAPAPKNGQAVGTNTIGSSEACMLGGMAMKWRWRKRMEAAGKPTDKPNLVCGPVQICWHKFARYWDVELREIPMRPGQLFMDPKRMIEACDENTIGVVPTFGVTYTGNYEFPQPLHDALDKFQADTGIDIDMHIDAASGGFLAPFVAPDIVWDFRLPRVKSISASGHKFGLAPLGCGWVIWRDEEALPQELVFNVDYLGGQIGTFAINFSRPAGQVIAQYYEFLRLGREGYTKVQNASYQVAAYLADEIAKLGPYEFICTGRPDEGIPAVCFKLKDGEDPGYTLYDLSERLRLRGWQVPAFTLGGEATDIVVMRIMCRRGFEMDFAELLLEDYKASLKYLSDHPKLQGIAQQNSFKHT</sequence>
<accession>P69908</accession>
<accession>P80063</accession>
<accession>Q2M7H9</accession>
<keyword id="KW-0002">3D-structure</keyword>
<keyword id="KW-0210">Decarboxylase</keyword>
<keyword id="KW-0903">Direct protein sequencing</keyword>
<keyword id="KW-0456">Lyase</keyword>
<keyword id="KW-0663">Pyridoxal phosphate</keyword>
<keyword id="KW-1185">Reference proteome</keyword>
<name>DCEA_ECOLI</name>
<evidence type="ECO:0000250" key="1"/>
<evidence type="ECO:0000269" key="2">
    <source>
    </source>
</evidence>
<evidence type="ECO:0000269" key="3">
    <source>
    </source>
</evidence>
<evidence type="ECO:0000269" key="4">
    <source>
    </source>
</evidence>
<evidence type="ECO:0000269" key="5">
    <source>
    </source>
</evidence>
<evidence type="ECO:0000269" key="6">
    <source>
    </source>
</evidence>
<evidence type="ECO:0000269" key="7">
    <source>
    </source>
</evidence>
<evidence type="ECO:0000269" key="8">
    <source>
    </source>
</evidence>
<evidence type="ECO:0000305" key="9"/>
<evidence type="ECO:0007829" key="10">
    <source>
        <dbReference type="PDB" id="1XEY"/>
    </source>
</evidence>